<reference key="1">
    <citation type="journal article" date="2009" name="Proc. Natl. Acad. Sci. U.S.A.">
        <title>Hamiltonella defensa, genome evolution of protective bacterial endosymbiont from pathogenic ancestors.</title>
        <authorList>
            <person name="Degnan P.H."/>
            <person name="Yu Y."/>
            <person name="Sisneros N."/>
            <person name="Wing R.A."/>
            <person name="Moran N.A."/>
        </authorList>
    </citation>
    <scope>NUCLEOTIDE SEQUENCE [LARGE SCALE GENOMIC DNA]</scope>
    <source>
        <strain>5AT</strain>
    </source>
</reference>
<name>TOLB_HAMD5</name>
<gene>
    <name evidence="1" type="primary">tolB</name>
    <name type="ordered locus">HDEF_0166</name>
</gene>
<evidence type="ECO:0000255" key="1">
    <source>
        <dbReference type="HAMAP-Rule" id="MF_00671"/>
    </source>
</evidence>
<organism>
    <name type="scientific">Hamiltonella defensa subsp. Acyrthosiphon pisum (strain 5AT)</name>
    <dbReference type="NCBI Taxonomy" id="572265"/>
    <lineage>
        <taxon>Bacteria</taxon>
        <taxon>Pseudomonadati</taxon>
        <taxon>Pseudomonadota</taxon>
        <taxon>Gammaproteobacteria</taxon>
        <taxon>Enterobacterales</taxon>
        <taxon>Enterobacteriaceae</taxon>
        <taxon>aphid secondary symbionts</taxon>
        <taxon>Candidatus Hamiltonella</taxon>
    </lineage>
</organism>
<comment type="function">
    <text evidence="1">Part of the Tol-Pal system, which plays a role in outer membrane invagination during cell division and is important for maintaining outer membrane integrity. TolB occupies a key intermediary position in the Tol-Pal system because it communicates directly with both membrane-embedded components, Pal in the outer membrane and TolA in the inner membrane.</text>
</comment>
<comment type="subunit">
    <text evidence="1">The Tol-Pal system is composed of five core proteins: the inner membrane proteins TolA, TolQ and TolR, the periplasmic protein TolB and the outer membrane protein Pal. They form a network linking the inner and outer membranes and the peptidoglycan layer.</text>
</comment>
<comment type="subcellular location">
    <subcellularLocation>
        <location evidence="1">Periplasm</location>
    </subcellularLocation>
</comment>
<comment type="similarity">
    <text evidence="1">Belongs to the TolB family.</text>
</comment>
<protein>
    <recommendedName>
        <fullName evidence="1">Tol-Pal system protein TolB</fullName>
    </recommendedName>
</protein>
<sequence length="429" mass="47229">MKPVFKMLLSLLILWTSLLHAQVRIQITQGVDSARPIAVVPFKWLGTVEPPEKIADIISSDLRNSGKFNPIDPSRMPEKPFTASELITSSWYGLGVDAVVVGQIQAGADNHYLISYQLVELSSGTVLTQNQYKVTQQWLRYAAHSASDEIFQKLTGIKGAFSTRIAYVVQKNTRQLPYELKISDYDGYNPFVVYRSSQPLMSPAWSPDGQKLAYVNFESGRSALVIQNLASGSIQKIANFQGHNGAPAFSPDGAKLAFALSKTGSLNIYMMDLASGNITQITDSRSNNTEPSWFPDSRYLAYTSDQAGRPQVYKIDISGHGVPQRITWNAKQNQNSAVSPDGTFLILVNSKDGQQHIAKQDLKTGDVQILTDTLLDETPSIAPNTTMVIYSSTQNANSVLQLVSTDGRFKALLPEVDGQVKFPAWSPYL</sequence>
<accession>C4K8V2</accession>
<keyword id="KW-0131">Cell cycle</keyword>
<keyword id="KW-0132">Cell division</keyword>
<keyword id="KW-0574">Periplasm</keyword>
<keyword id="KW-0732">Signal</keyword>
<dbReference type="EMBL" id="CP001277">
    <property type="protein sequence ID" value="ACQ66939.1"/>
    <property type="molecule type" value="Genomic_DNA"/>
</dbReference>
<dbReference type="RefSeq" id="WP_012737904.1">
    <property type="nucleotide sequence ID" value="NC_012751.1"/>
</dbReference>
<dbReference type="SMR" id="C4K8V2"/>
<dbReference type="STRING" id="572265.HDEF_0166"/>
<dbReference type="GeneID" id="66260101"/>
<dbReference type="KEGG" id="hde:HDEF_0166"/>
<dbReference type="eggNOG" id="COG0823">
    <property type="taxonomic scope" value="Bacteria"/>
</dbReference>
<dbReference type="HOGENOM" id="CLU_047123_0_0_6"/>
<dbReference type="Proteomes" id="UP000002334">
    <property type="component" value="Chromosome"/>
</dbReference>
<dbReference type="GO" id="GO:0042597">
    <property type="term" value="C:periplasmic space"/>
    <property type="evidence" value="ECO:0007669"/>
    <property type="project" value="UniProtKB-SubCell"/>
</dbReference>
<dbReference type="GO" id="GO:0051301">
    <property type="term" value="P:cell division"/>
    <property type="evidence" value="ECO:0007669"/>
    <property type="project" value="UniProtKB-UniRule"/>
</dbReference>
<dbReference type="GO" id="GO:0017038">
    <property type="term" value="P:protein import"/>
    <property type="evidence" value="ECO:0007669"/>
    <property type="project" value="InterPro"/>
</dbReference>
<dbReference type="Gene3D" id="2.120.10.30">
    <property type="entry name" value="TolB, C-terminal domain"/>
    <property type="match status" value="1"/>
</dbReference>
<dbReference type="Gene3D" id="3.40.50.10070">
    <property type="entry name" value="TolB, N-terminal domain"/>
    <property type="match status" value="1"/>
</dbReference>
<dbReference type="HAMAP" id="MF_00671">
    <property type="entry name" value="TolB"/>
    <property type="match status" value="1"/>
</dbReference>
<dbReference type="InterPro" id="IPR011042">
    <property type="entry name" value="6-blade_b-propeller_TolB-like"/>
</dbReference>
<dbReference type="InterPro" id="IPR011659">
    <property type="entry name" value="PD40"/>
</dbReference>
<dbReference type="InterPro" id="IPR014167">
    <property type="entry name" value="Tol-Pal_TolB"/>
</dbReference>
<dbReference type="InterPro" id="IPR007195">
    <property type="entry name" value="TolB_N"/>
</dbReference>
<dbReference type="NCBIfam" id="TIGR02800">
    <property type="entry name" value="propeller_TolB"/>
    <property type="match status" value="1"/>
</dbReference>
<dbReference type="PANTHER" id="PTHR36842:SF1">
    <property type="entry name" value="PROTEIN TOLB"/>
    <property type="match status" value="1"/>
</dbReference>
<dbReference type="PANTHER" id="PTHR36842">
    <property type="entry name" value="PROTEIN TOLB HOMOLOG"/>
    <property type="match status" value="1"/>
</dbReference>
<dbReference type="Pfam" id="PF07676">
    <property type="entry name" value="PD40"/>
    <property type="match status" value="3"/>
</dbReference>
<dbReference type="Pfam" id="PF04052">
    <property type="entry name" value="TolB_N"/>
    <property type="match status" value="1"/>
</dbReference>
<dbReference type="SUPFAM" id="SSF52964">
    <property type="entry name" value="TolB, N-terminal domain"/>
    <property type="match status" value="1"/>
</dbReference>
<dbReference type="SUPFAM" id="SSF69304">
    <property type="entry name" value="Tricorn protease N-terminal domain"/>
    <property type="match status" value="1"/>
</dbReference>
<proteinExistence type="inferred from homology"/>
<feature type="signal peptide" evidence="1">
    <location>
        <begin position="1"/>
        <end position="21"/>
    </location>
</feature>
<feature type="chain" id="PRO_1000212509" description="Tol-Pal system protein TolB" evidence="1">
    <location>
        <begin position="22"/>
        <end position="429"/>
    </location>
</feature>